<accession>A6RPU8</accession>
<accession>A0A384J8N7</accession>
<comment type="function">
    <text evidence="1">DNA-dependent RNA polymerase catalyzes the transcription of DNA into RNA using the four ribonucleoside triphosphates as substrates. Specific core component of RNA polymerase III which synthesizes small RNAs, such as 5S rRNA and tRNAs (By similarity).</text>
</comment>
<comment type="subunit">
    <text evidence="1">Component of the RNA polymerase III (Pol III) complex consisting of 17 subunits.</text>
</comment>
<comment type="subcellular location">
    <subcellularLocation>
        <location evidence="1">Nucleus</location>
    </subcellularLocation>
</comment>
<comment type="similarity">
    <text evidence="3">Belongs to the RNA polymerase beta chain family.</text>
</comment>
<sequence>MSKSKHAVELCSLLVDDIYGELSSRIFTILLRRGRLPMNALKRHTQLTTRQLKLGLTVLVRQNLVYHNSEGSDTHYEANIDAAYALVRSGKILEIAEERFGSVAAEIMGQLVLLGHAKISDIIAELNKNHEPHANGNSNETNGATNGNGVHSYPSGQLNHTLIQLLEEGFIQPVGQNMFRSPTDSYNAVEKALLQDSYGGATRGTKQKDELRMRIRGQLQELRAQVPNWKPVGYNRSSTNGHTNDIASKRRRLSHSGGATNGYDFGDDESSKLDGNLVLRINHEKCTVFMRNRRLVELANSRIGVTTSYIYAELLRLMAEQIPRCRPDPRIDDAVDDADGPSIIITTQELTDALSKTINVSTGIGKATSQKIDTSRLDKLQNGRKRKAQDEAEVEGVASSDEESEDDHKPFTNGNGHAMDVDEDDPFSDQPGANTSKRAVTFKDRDRTPPPTESRQARMMHVMSHLQLLAADDCQLLRKCGARQMGEWTVDFERVIDRLRESELDSIIYENFGQIGHRLVRVMRKMGKLEEKHIAKLALIKQQDSRTTLVNMQMHGMVDIQEVPRDTGRMIVRTIHLWFCDEDRVTSLLLDRTYKAMSRCLQRLDVEKRRKANIIALSERTDVQGQEEAFLRPEQMNQLREIRAKEEDLLGQICRLDELVGIFQDY</sequence>
<proteinExistence type="inferred from homology"/>
<protein>
    <recommendedName>
        <fullName>DNA-directed RNA polymerase III subunit rpc3</fullName>
        <shortName>RNA polymerase III subunit C3</shortName>
    </recommendedName>
</protein>
<gene>
    <name type="primary">rpc82</name>
    <name type="synonym">rpc3</name>
    <name type="ORF">BC1G_02471</name>
    <name type="ORF">BCIN_02g02530</name>
</gene>
<feature type="chain" id="PRO_0000351028" description="DNA-directed RNA polymerase III subunit rpc3">
    <location>
        <begin position="1"/>
        <end position="666"/>
    </location>
</feature>
<feature type="region of interest" description="Disordered" evidence="2">
    <location>
        <begin position="130"/>
        <end position="153"/>
    </location>
</feature>
<feature type="region of interest" description="Disordered" evidence="2">
    <location>
        <begin position="375"/>
        <end position="455"/>
    </location>
</feature>
<feature type="region of interest" description="Leucine-zipper">
    <location>
        <begin position="593"/>
        <end position="614"/>
    </location>
</feature>
<feature type="compositionally biased region" description="Polar residues" evidence="2">
    <location>
        <begin position="135"/>
        <end position="153"/>
    </location>
</feature>
<organism>
    <name type="scientific">Botryotinia fuckeliana (strain B05.10)</name>
    <name type="common">Noble rot fungus</name>
    <name type="synonym">Botrytis cinerea</name>
    <dbReference type="NCBI Taxonomy" id="332648"/>
    <lineage>
        <taxon>Eukaryota</taxon>
        <taxon>Fungi</taxon>
        <taxon>Dikarya</taxon>
        <taxon>Ascomycota</taxon>
        <taxon>Pezizomycotina</taxon>
        <taxon>Leotiomycetes</taxon>
        <taxon>Helotiales</taxon>
        <taxon>Sclerotiniaceae</taxon>
        <taxon>Botrytis</taxon>
    </lineage>
</organism>
<evidence type="ECO:0000250" key="1"/>
<evidence type="ECO:0000256" key="2">
    <source>
        <dbReference type="SAM" id="MobiDB-lite"/>
    </source>
</evidence>
<evidence type="ECO:0000305" key="3"/>
<reference key="1">
    <citation type="journal article" date="2011" name="PLoS Genet.">
        <title>Genomic analysis of the necrotrophic fungal pathogens Sclerotinia sclerotiorum and Botrytis cinerea.</title>
        <authorList>
            <person name="Amselem J."/>
            <person name="Cuomo C.A."/>
            <person name="van Kan J.A.L."/>
            <person name="Viaud M."/>
            <person name="Benito E.P."/>
            <person name="Couloux A."/>
            <person name="Coutinho P.M."/>
            <person name="de Vries R.P."/>
            <person name="Dyer P.S."/>
            <person name="Fillinger S."/>
            <person name="Fournier E."/>
            <person name="Gout L."/>
            <person name="Hahn M."/>
            <person name="Kohn L."/>
            <person name="Lapalu N."/>
            <person name="Plummer K.M."/>
            <person name="Pradier J.-M."/>
            <person name="Quevillon E."/>
            <person name="Sharon A."/>
            <person name="Simon A."/>
            <person name="ten Have A."/>
            <person name="Tudzynski B."/>
            <person name="Tudzynski P."/>
            <person name="Wincker P."/>
            <person name="Andrew M."/>
            <person name="Anthouard V."/>
            <person name="Beever R.E."/>
            <person name="Beffa R."/>
            <person name="Benoit I."/>
            <person name="Bouzid O."/>
            <person name="Brault B."/>
            <person name="Chen Z."/>
            <person name="Choquer M."/>
            <person name="Collemare J."/>
            <person name="Cotton P."/>
            <person name="Danchin E.G."/>
            <person name="Da Silva C."/>
            <person name="Gautier A."/>
            <person name="Giraud C."/>
            <person name="Giraud T."/>
            <person name="Gonzalez C."/>
            <person name="Grossetete S."/>
            <person name="Gueldener U."/>
            <person name="Henrissat B."/>
            <person name="Howlett B.J."/>
            <person name="Kodira C."/>
            <person name="Kretschmer M."/>
            <person name="Lappartient A."/>
            <person name="Leroch M."/>
            <person name="Levis C."/>
            <person name="Mauceli E."/>
            <person name="Neuveglise C."/>
            <person name="Oeser B."/>
            <person name="Pearson M."/>
            <person name="Poulain J."/>
            <person name="Poussereau N."/>
            <person name="Quesneville H."/>
            <person name="Rascle C."/>
            <person name="Schumacher J."/>
            <person name="Segurens B."/>
            <person name="Sexton A."/>
            <person name="Silva E."/>
            <person name="Sirven C."/>
            <person name="Soanes D.M."/>
            <person name="Talbot N.J."/>
            <person name="Templeton M."/>
            <person name="Yandava C."/>
            <person name="Yarden O."/>
            <person name="Zeng Q."/>
            <person name="Rollins J.A."/>
            <person name="Lebrun M.-H."/>
            <person name="Dickman M."/>
        </authorList>
    </citation>
    <scope>NUCLEOTIDE SEQUENCE [LARGE SCALE GENOMIC DNA]</scope>
    <source>
        <strain>B05.10</strain>
    </source>
</reference>
<reference key="2">
    <citation type="journal article" date="2012" name="Eukaryot. Cell">
        <title>Genome update of Botrytis cinerea strains B05.10 and T4.</title>
        <authorList>
            <person name="Staats M."/>
            <person name="van Kan J.A.L."/>
        </authorList>
    </citation>
    <scope>NUCLEOTIDE SEQUENCE [LARGE SCALE GENOMIC DNA]</scope>
    <scope>GENOME REANNOTATION</scope>
    <source>
        <strain>B05.10</strain>
    </source>
</reference>
<reference key="3">
    <citation type="journal article" date="2017" name="Mol. Plant Pathol.">
        <title>A gapless genome sequence of the fungus Botrytis cinerea.</title>
        <authorList>
            <person name="van Kan J.A.L."/>
            <person name="Stassen J.H.M."/>
            <person name="Mosbach A."/>
            <person name="van der Lee T.A.J."/>
            <person name="Faino L."/>
            <person name="Farmer A.D."/>
            <person name="Papasotiriou D.G."/>
            <person name="Zhou S."/>
            <person name="Seidl M.F."/>
            <person name="Cottam E."/>
            <person name="Edel D."/>
            <person name="Hahn M."/>
            <person name="Schwartz D.C."/>
            <person name="Dietrich R.A."/>
            <person name="Widdison S."/>
            <person name="Scalliet G."/>
        </authorList>
    </citation>
    <scope>NUCLEOTIDE SEQUENCE [LARGE SCALE GENOMIC DNA]</scope>
    <scope>GENOME REANNOTATION</scope>
    <source>
        <strain>B05.10</strain>
    </source>
</reference>
<keyword id="KW-0240">DNA-directed RNA polymerase</keyword>
<keyword id="KW-0539">Nucleus</keyword>
<keyword id="KW-1185">Reference proteome</keyword>
<keyword id="KW-0804">Transcription</keyword>
<keyword id="KW-0862">Zinc</keyword>
<name>RPC3_BOTFB</name>
<dbReference type="EMBL" id="CP009806">
    <property type="protein sequence ID" value="ATZ46909.1"/>
    <property type="molecule type" value="Genomic_DNA"/>
</dbReference>
<dbReference type="SMR" id="A6RPU8"/>
<dbReference type="EnsemblFungi" id="Bcin02g02530.1">
    <property type="protein sequence ID" value="Bcin02p02530.1"/>
    <property type="gene ID" value="Bcin02g02530"/>
</dbReference>
<dbReference type="VEuPathDB" id="FungiDB:Bcin02g02530"/>
<dbReference type="OrthoDB" id="272392at2759"/>
<dbReference type="Proteomes" id="UP000001798">
    <property type="component" value="Chromosome bcin02"/>
</dbReference>
<dbReference type="GO" id="GO:0005666">
    <property type="term" value="C:RNA polymerase III complex"/>
    <property type="evidence" value="ECO:0007669"/>
    <property type="project" value="InterPro"/>
</dbReference>
<dbReference type="GO" id="GO:0003697">
    <property type="term" value="F:single-stranded DNA binding"/>
    <property type="evidence" value="ECO:0007669"/>
    <property type="project" value="InterPro"/>
</dbReference>
<dbReference type="GO" id="GO:0006351">
    <property type="term" value="P:DNA-templated transcription"/>
    <property type="evidence" value="ECO:0007669"/>
    <property type="project" value="InterPro"/>
</dbReference>
<dbReference type="Gene3D" id="1.10.10.10">
    <property type="entry name" value="Winged helix-like DNA-binding domain superfamily/Winged helix DNA-binding domain"/>
    <property type="match status" value="2"/>
</dbReference>
<dbReference type="InterPro" id="IPR055207">
    <property type="entry name" value="POLR3C_WHD"/>
</dbReference>
<dbReference type="InterPro" id="IPR013197">
    <property type="entry name" value="RNA_pol_III_RPC82-rel_HTH"/>
</dbReference>
<dbReference type="InterPro" id="IPR008806">
    <property type="entry name" value="RNA_pol_III_Rpc82_C"/>
</dbReference>
<dbReference type="InterPro" id="IPR039748">
    <property type="entry name" value="RPC3"/>
</dbReference>
<dbReference type="InterPro" id="IPR036388">
    <property type="entry name" value="WH-like_DNA-bd_sf"/>
</dbReference>
<dbReference type="PANTHER" id="PTHR12949:SF0">
    <property type="entry name" value="DNA-DIRECTED RNA POLYMERASE III SUBUNIT RPC3"/>
    <property type="match status" value="1"/>
</dbReference>
<dbReference type="PANTHER" id="PTHR12949">
    <property type="entry name" value="RNA POLYMERASE III DNA DIRECTED -RELATED"/>
    <property type="match status" value="1"/>
</dbReference>
<dbReference type="Pfam" id="PF08221">
    <property type="entry name" value="HTH_9"/>
    <property type="match status" value="1"/>
</dbReference>
<dbReference type="Pfam" id="PF22536">
    <property type="entry name" value="POLR3C_WHD"/>
    <property type="match status" value="1"/>
</dbReference>
<dbReference type="Pfam" id="PF05645">
    <property type="entry name" value="RNA_pol_Rpc82"/>
    <property type="match status" value="1"/>
</dbReference>